<feature type="chain" id="PRO_0000200092" description="Homeobox protein Hox-A10b">
    <location>
        <begin position="1"/>
        <end position="330"/>
    </location>
</feature>
<feature type="DNA-binding region" description="Homeobox" evidence="2">
    <location>
        <begin position="256"/>
        <end position="315"/>
    </location>
</feature>
<feature type="region of interest" description="Disordered" evidence="3">
    <location>
        <begin position="190"/>
        <end position="249"/>
    </location>
</feature>
<evidence type="ECO:0000250" key="1"/>
<evidence type="ECO:0000255" key="2">
    <source>
        <dbReference type="PROSITE-ProRule" id="PRU00108"/>
    </source>
</evidence>
<evidence type="ECO:0000256" key="3">
    <source>
        <dbReference type="SAM" id="MobiDB-lite"/>
    </source>
</evidence>
<evidence type="ECO:0000269" key="4">
    <source>
    </source>
</evidence>
<evidence type="ECO:0000305" key="5"/>
<sequence>MSCSDSPSGNSFLVDSLIHGRSEGSGHYYQNSGVYLQPTSEYSYGLSNCGYFSGLKRNESNSQNVVPTCGPYQGMETWLETSRSCRIEQPNSQITPRSFSPTIKEENSYCLYESEKCPKETITEDISYSRLTPNSCPSSNNNGCVPVPGYFRLSQTCTTSKGFTDNQTIPTHVVAQRSTRFDSSLSAIAAEASRDESDEPPTCAPCAPGRNKELRGSTGTASSPEPPDSPEKAVTVTKAGDSKSESTANWLTAKSGRKKRCPYTKHQTLELEKEFLFNMYLTRERRLEISRSVHLTDRQVKIWFQNRRMKLKKMSRENRIRELSANFSFS</sequence>
<organism>
    <name type="scientific">Danio rerio</name>
    <name type="common">Zebrafish</name>
    <name type="synonym">Brachydanio rerio</name>
    <dbReference type="NCBI Taxonomy" id="7955"/>
    <lineage>
        <taxon>Eukaryota</taxon>
        <taxon>Metazoa</taxon>
        <taxon>Chordata</taxon>
        <taxon>Craniata</taxon>
        <taxon>Vertebrata</taxon>
        <taxon>Euteleostomi</taxon>
        <taxon>Actinopterygii</taxon>
        <taxon>Neopterygii</taxon>
        <taxon>Teleostei</taxon>
        <taxon>Ostariophysi</taxon>
        <taxon>Cypriniformes</taxon>
        <taxon>Danionidae</taxon>
        <taxon>Danioninae</taxon>
        <taxon>Danio</taxon>
    </lineage>
</organism>
<name>HXAAB_DANRE</name>
<protein>
    <recommendedName>
        <fullName>Homeobox protein Hox-A10b</fullName>
        <shortName>Hox-A10</shortName>
    </recommendedName>
</protein>
<accession>Q8AWY2</accession>
<accession>O57357</accession>
<accession>Q4PRA5</accession>
<gene>
    <name type="primary">hoxa10b</name>
    <name type="synonym">hoxa10</name>
</gene>
<reference key="1">
    <citation type="journal article" date="2013" name="Nature">
        <title>The zebrafish reference genome sequence and its relationship to the human genome.</title>
        <authorList>
            <person name="Howe K."/>
            <person name="Clark M.D."/>
            <person name="Torroja C.F."/>
            <person name="Torrance J."/>
            <person name="Berthelot C."/>
            <person name="Muffato M."/>
            <person name="Collins J.E."/>
            <person name="Humphray S."/>
            <person name="McLaren K."/>
            <person name="Matthews L."/>
            <person name="McLaren S."/>
            <person name="Sealy I."/>
            <person name="Caccamo M."/>
            <person name="Churcher C."/>
            <person name="Scott C."/>
            <person name="Barrett J.C."/>
            <person name="Koch R."/>
            <person name="Rauch G.J."/>
            <person name="White S."/>
            <person name="Chow W."/>
            <person name="Kilian B."/>
            <person name="Quintais L.T."/>
            <person name="Guerra-Assuncao J.A."/>
            <person name="Zhou Y."/>
            <person name="Gu Y."/>
            <person name="Yen J."/>
            <person name="Vogel J.H."/>
            <person name="Eyre T."/>
            <person name="Redmond S."/>
            <person name="Banerjee R."/>
            <person name="Chi J."/>
            <person name="Fu B."/>
            <person name="Langley E."/>
            <person name="Maguire S.F."/>
            <person name="Laird G.K."/>
            <person name="Lloyd D."/>
            <person name="Kenyon E."/>
            <person name="Donaldson S."/>
            <person name="Sehra H."/>
            <person name="Almeida-King J."/>
            <person name="Loveland J."/>
            <person name="Trevanion S."/>
            <person name="Jones M."/>
            <person name="Quail M."/>
            <person name="Willey D."/>
            <person name="Hunt A."/>
            <person name="Burton J."/>
            <person name="Sims S."/>
            <person name="McLay K."/>
            <person name="Plumb B."/>
            <person name="Davis J."/>
            <person name="Clee C."/>
            <person name="Oliver K."/>
            <person name="Clark R."/>
            <person name="Riddle C."/>
            <person name="Elliot D."/>
            <person name="Threadgold G."/>
            <person name="Harden G."/>
            <person name="Ware D."/>
            <person name="Begum S."/>
            <person name="Mortimore B."/>
            <person name="Kerry G."/>
            <person name="Heath P."/>
            <person name="Phillimore B."/>
            <person name="Tracey A."/>
            <person name="Corby N."/>
            <person name="Dunn M."/>
            <person name="Johnson C."/>
            <person name="Wood J."/>
            <person name="Clark S."/>
            <person name="Pelan S."/>
            <person name="Griffiths G."/>
            <person name="Smith M."/>
            <person name="Glithero R."/>
            <person name="Howden P."/>
            <person name="Barker N."/>
            <person name="Lloyd C."/>
            <person name="Stevens C."/>
            <person name="Harley J."/>
            <person name="Holt K."/>
            <person name="Panagiotidis G."/>
            <person name="Lovell J."/>
            <person name="Beasley H."/>
            <person name="Henderson C."/>
            <person name="Gordon D."/>
            <person name="Auger K."/>
            <person name="Wright D."/>
            <person name="Collins J."/>
            <person name="Raisen C."/>
            <person name="Dyer L."/>
            <person name="Leung K."/>
            <person name="Robertson L."/>
            <person name="Ambridge K."/>
            <person name="Leongamornlert D."/>
            <person name="McGuire S."/>
            <person name="Gilderthorp R."/>
            <person name="Griffiths C."/>
            <person name="Manthravadi D."/>
            <person name="Nichol S."/>
            <person name="Barker G."/>
            <person name="Whitehead S."/>
            <person name="Kay M."/>
            <person name="Brown J."/>
            <person name="Murnane C."/>
            <person name="Gray E."/>
            <person name="Humphries M."/>
            <person name="Sycamore N."/>
            <person name="Barker D."/>
            <person name="Saunders D."/>
            <person name="Wallis J."/>
            <person name="Babbage A."/>
            <person name="Hammond S."/>
            <person name="Mashreghi-Mohammadi M."/>
            <person name="Barr L."/>
            <person name="Martin S."/>
            <person name="Wray P."/>
            <person name="Ellington A."/>
            <person name="Matthews N."/>
            <person name="Ellwood M."/>
            <person name="Woodmansey R."/>
            <person name="Clark G."/>
            <person name="Cooper J."/>
            <person name="Tromans A."/>
            <person name="Grafham D."/>
            <person name="Skuce C."/>
            <person name="Pandian R."/>
            <person name="Andrews R."/>
            <person name="Harrison E."/>
            <person name="Kimberley A."/>
            <person name="Garnett J."/>
            <person name="Fosker N."/>
            <person name="Hall R."/>
            <person name="Garner P."/>
            <person name="Kelly D."/>
            <person name="Bird C."/>
            <person name="Palmer S."/>
            <person name="Gehring I."/>
            <person name="Berger A."/>
            <person name="Dooley C.M."/>
            <person name="Ersan-Urun Z."/>
            <person name="Eser C."/>
            <person name="Geiger H."/>
            <person name="Geisler M."/>
            <person name="Karotki L."/>
            <person name="Kirn A."/>
            <person name="Konantz J."/>
            <person name="Konantz M."/>
            <person name="Oberlander M."/>
            <person name="Rudolph-Geiger S."/>
            <person name="Teucke M."/>
            <person name="Lanz C."/>
            <person name="Raddatz G."/>
            <person name="Osoegawa K."/>
            <person name="Zhu B."/>
            <person name="Rapp A."/>
            <person name="Widaa S."/>
            <person name="Langford C."/>
            <person name="Yang F."/>
            <person name="Schuster S.C."/>
            <person name="Carter N.P."/>
            <person name="Harrow J."/>
            <person name="Ning Z."/>
            <person name="Herrero J."/>
            <person name="Searle S.M."/>
            <person name="Enright A."/>
            <person name="Geisler R."/>
            <person name="Plasterk R.H."/>
            <person name="Lee C."/>
            <person name="Westerfield M."/>
            <person name="de Jong P.J."/>
            <person name="Zon L.I."/>
            <person name="Postlethwait J.H."/>
            <person name="Nusslein-Volhard C."/>
            <person name="Hubbard T.J."/>
            <person name="Roest Crollius H."/>
            <person name="Rogers J."/>
            <person name="Stemple D.L."/>
        </authorList>
    </citation>
    <scope>NUCLEOTIDE SEQUENCE [LARGE SCALE GENOMIC DNA]</scope>
    <source>
        <strain>Tuebingen</strain>
    </source>
</reference>
<reference key="2">
    <citation type="journal article" date="2005" name="Evol. Dev.">
        <title>Genomic annotation and transcriptome analysis of the zebrafish (Danio rerio) hox complex with description of a novel member, hoxb13a.</title>
        <authorList>
            <person name="Corredor-Adamez M."/>
            <person name="Welten M.C.M."/>
            <person name="Spaink H.P."/>
            <person name="Jeffery J.E."/>
            <person name="Schoon R.T."/>
            <person name="de Bakker M.A.G."/>
            <person name="Bagowski C.P."/>
            <person name="Meijer A.H."/>
            <person name="Verbeek F.J."/>
            <person name="Richardson M.K."/>
        </authorList>
    </citation>
    <scope>NUCLEOTIDE SEQUENCE [MRNA] OF 154-242</scope>
    <source>
        <strain>Tuebingen</strain>
    </source>
</reference>
<reference key="3">
    <citation type="journal article" date="1998" name="Development">
        <title>Zebrafish hox genes: genomic organization and modified colinear expression patterns in the trunk.</title>
        <authorList>
            <person name="Prince V.E."/>
            <person name="Joly L."/>
            <person name="Ekker M."/>
            <person name="Ho R.K."/>
        </authorList>
    </citation>
    <scope>NUCLEOTIDE SEQUENCE [MRNA] OF 287-330</scope>
    <scope>DEVELOPMENTAL STAGE</scope>
    <source>
        <tissue>Embryo</tissue>
    </source>
</reference>
<dbReference type="EMBL" id="AL645795">
    <property type="protein sequence ID" value="CAD59110.1"/>
    <property type="molecule type" value="Genomic_DNA"/>
</dbReference>
<dbReference type="EMBL" id="DQ060538">
    <property type="protein sequence ID" value="AAY67916.1"/>
    <property type="molecule type" value="mRNA"/>
</dbReference>
<dbReference type="EMBL" id="Y14527">
    <property type="protein sequence ID" value="CAA74862.1"/>
    <property type="molecule type" value="mRNA"/>
</dbReference>
<dbReference type="RefSeq" id="NP_571230.1">
    <property type="nucleotide sequence ID" value="NM_131155.1"/>
</dbReference>
<dbReference type="SMR" id="Q8AWY2"/>
<dbReference type="FunCoup" id="Q8AWY2">
    <property type="interactions" value="127"/>
</dbReference>
<dbReference type="STRING" id="7955.ENSDARP00000046765"/>
<dbReference type="PaxDb" id="7955-ENSDARP00000046765"/>
<dbReference type="GeneID" id="30391"/>
<dbReference type="KEGG" id="dre:30391"/>
<dbReference type="AGR" id="ZFIN:ZDB-GENE-990415-97"/>
<dbReference type="CTD" id="30391"/>
<dbReference type="ZFIN" id="ZDB-GENE-990415-97">
    <property type="gene designation" value="hoxa10b"/>
</dbReference>
<dbReference type="eggNOG" id="KOG0487">
    <property type="taxonomic scope" value="Eukaryota"/>
</dbReference>
<dbReference type="InParanoid" id="Q8AWY2"/>
<dbReference type="OrthoDB" id="6159439at2759"/>
<dbReference type="PhylomeDB" id="Q8AWY2"/>
<dbReference type="PRO" id="PR:Q8AWY2"/>
<dbReference type="Proteomes" id="UP000000437">
    <property type="component" value="Chromosome 16"/>
</dbReference>
<dbReference type="GO" id="GO:0005634">
    <property type="term" value="C:nucleus"/>
    <property type="evidence" value="ECO:0000318"/>
    <property type="project" value="GO_Central"/>
</dbReference>
<dbReference type="GO" id="GO:0000981">
    <property type="term" value="F:DNA-binding transcription factor activity, RNA polymerase II-specific"/>
    <property type="evidence" value="ECO:0000318"/>
    <property type="project" value="GO_Central"/>
</dbReference>
<dbReference type="GO" id="GO:0000978">
    <property type="term" value="F:RNA polymerase II cis-regulatory region sequence-specific DNA binding"/>
    <property type="evidence" value="ECO:0000318"/>
    <property type="project" value="GO_Central"/>
</dbReference>
<dbReference type="GO" id="GO:0006357">
    <property type="term" value="P:regulation of transcription by RNA polymerase II"/>
    <property type="evidence" value="ECO:0000318"/>
    <property type="project" value="GO_Central"/>
</dbReference>
<dbReference type="CDD" id="cd00086">
    <property type="entry name" value="homeodomain"/>
    <property type="match status" value="1"/>
</dbReference>
<dbReference type="FunFam" id="1.10.10.60:FF:000018">
    <property type="entry name" value="Homeobox A10"/>
    <property type="match status" value="1"/>
</dbReference>
<dbReference type="Gene3D" id="1.10.10.60">
    <property type="entry name" value="Homeodomain-like"/>
    <property type="match status" value="1"/>
</dbReference>
<dbReference type="InterPro" id="IPR001356">
    <property type="entry name" value="HD"/>
</dbReference>
<dbReference type="InterPro" id="IPR020479">
    <property type="entry name" value="HD_metazoa"/>
</dbReference>
<dbReference type="InterPro" id="IPR017970">
    <property type="entry name" value="Homeobox_CS"/>
</dbReference>
<dbReference type="InterPro" id="IPR009057">
    <property type="entry name" value="Homeodomain-like_sf"/>
</dbReference>
<dbReference type="InterPro" id="IPR046333">
    <property type="entry name" value="HXA10/ABDB-like"/>
</dbReference>
<dbReference type="PANTHER" id="PTHR45874">
    <property type="entry name" value="HOMEOBOX PROTEIN ABDOMINAL-B"/>
    <property type="match status" value="1"/>
</dbReference>
<dbReference type="PANTHER" id="PTHR45874:SF1">
    <property type="entry name" value="HOMEOBOX PROTEIN HOX-A10"/>
    <property type="match status" value="1"/>
</dbReference>
<dbReference type="Pfam" id="PF00046">
    <property type="entry name" value="Homeodomain"/>
    <property type="match status" value="1"/>
</dbReference>
<dbReference type="PRINTS" id="PR00024">
    <property type="entry name" value="HOMEOBOX"/>
</dbReference>
<dbReference type="SMART" id="SM00389">
    <property type="entry name" value="HOX"/>
    <property type="match status" value="1"/>
</dbReference>
<dbReference type="SUPFAM" id="SSF46689">
    <property type="entry name" value="Homeodomain-like"/>
    <property type="match status" value="1"/>
</dbReference>
<dbReference type="PROSITE" id="PS00027">
    <property type="entry name" value="HOMEOBOX_1"/>
    <property type="match status" value="1"/>
</dbReference>
<dbReference type="PROSITE" id="PS50071">
    <property type="entry name" value="HOMEOBOX_2"/>
    <property type="match status" value="1"/>
</dbReference>
<proteinExistence type="evidence at transcript level"/>
<keyword id="KW-0217">Developmental protein</keyword>
<keyword id="KW-0238">DNA-binding</keyword>
<keyword id="KW-0371">Homeobox</keyword>
<keyword id="KW-0539">Nucleus</keyword>
<keyword id="KW-1185">Reference proteome</keyword>
<keyword id="KW-0804">Transcription</keyword>
<keyword id="KW-0805">Transcription regulation</keyword>
<comment type="function">
    <text evidence="1">Sequence-specific transcription factor which is part of a developmental regulatory system that provides cells with specific positional identities on the anterior-posterior axis.</text>
</comment>
<comment type="subcellular location">
    <subcellularLocation>
        <location evidence="2">Nucleus</location>
    </subcellularLocation>
</comment>
<comment type="developmental stage">
    <text evidence="4">At the 10-somite stage, expressed in the paraxial mesoderm with an anterior expression limit posterior to the last somite. At the 20-somite stage, expressed within the developing CNS with an anterior expression limit adjacent to the somite 10/11 boundary.</text>
</comment>
<comment type="similarity">
    <text evidence="5">Belongs to the Abd-B homeobox family.</text>
</comment>